<feature type="signal peptide" evidence="1">
    <location>
        <begin position="1"/>
        <end position="25"/>
    </location>
</feature>
<feature type="chain" id="PRO_0000021721" description="Mgp-operon protein 3">
    <location>
        <begin position="26"/>
        <end position="1218"/>
    </location>
</feature>
<feature type="transmembrane region" description="Helical" evidence="1">
    <location>
        <begin position="1121"/>
        <end position="1141"/>
    </location>
</feature>
<feature type="region of interest" description="Disordered" evidence="2">
    <location>
        <begin position="109"/>
        <end position="129"/>
    </location>
</feature>
<feature type="region of interest" description="Disordered" evidence="2">
    <location>
        <begin position="213"/>
        <end position="245"/>
    </location>
</feature>
<feature type="region of interest" description="Disordered" evidence="2">
    <location>
        <begin position="262"/>
        <end position="353"/>
    </location>
</feature>
<feature type="region of interest" description="Disordered" evidence="2">
    <location>
        <begin position="411"/>
        <end position="440"/>
    </location>
</feature>
<feature type="region of interest" description="Disordered" evidence="2">
    <location>
        <begin position="1192"/>
        <end position="1218"/>
    </location>
</feature>
<feature type="compositionally biased region" description="Low complexity" evidence="2">
    <location>
        <begin position="116"/>
        <end position="129"/>
    </location>
</feature>
<feature type="compositionally biased region" description="Polar residues" evidence="2">
    <location>
        <begin position="217"/>
        <end position="231"/>
    </location>
</feature>
<feature type="compositionally biased region" description="Basic and acidic residues" evidence="2">
    <location>
        <begin position="265"/>
        <end position="286"/>
    </location>
</feature>
<feature type="compositionally biased region" description="Low complexity" evidence="2">
    <location>
        <begin position="301"/>
        <end position="342"/>
    </location>
</feature>
<feature type="compositionally biased region" description="Polar residues" evidence="2">
    <location>
        <begin position="411"/>
        <end position="428"/>
    </location>
</feature>
<feature type="compositionally biased region" description="Low complexity" evidence="2">
    <location>
        <begin position="1192"/>
        <end position="1204"/>
    </location>
</feature>
<feature type="compositionally biased region" description="Pro residues" evidence="2">
    <location>
        <begin position="1205"/>
        <end position="1218"/>
    </location>
</feature>
<feature type="strand" evidence="4">
    <location>
        <begin position="28"/>
        <end position="32"/>
    </location>
</feature>
<feature type="strand" evidence="4">
    <location>
        <begin position="35"/>
        <end position="39"/>
    </location>
</feature>
<feature type="strand" evidence="4">
    <location>
        <begin position="43"/>
        <end position="48"/>
    </location>
</feature>
<feature type="helix" evidence="4">
    <location>
        <begin position="52"/>
        <end position="55"/>
    </location>
</feature>
<feature type="strand" evidence="4">
    <location>
        <begin position="62"/>
        <end position="70"/>
    </location>
</feature>
<feature type="turn" evidence="4">
    <location>
        <begin position="71"/>
        <end position="73"/>
    </location>
</feature>
<feature type="strand" evidence="4">
    <location>
        <begin position="74"/>
        <end position="81"/>
    </location>
</feature>
<feature type="strand" evidence="4">
    <location>
        <begin position="86"/>
        <end position="88"/>
    </location>
</feature>
<feature type="strand" evidence="4">
    <location>
        <begin position="94"/>
        <end position="99"/>
    </location>
</feature>
<feature type="strand" evidence="4">
    <location>
        <begin position="102"/>
        <end position="106"/>
    </location>
</feature>
<feature type="helix" evidence="4">
    <location>
        <begin position="108"/>
        <end position="115"/>
    </location>
</feature>
<feature type="strand" evidence="4">
    <location>
        <begin position="136"/>
        <end position="143"/>
    </location>
</feature>
<feature type="turn" evidence="4">
    <location>
        <begin position="144"/>
        <end position="146"/>
    </location>
</feature>
<feature type="strand" evidence="4">
    <location>
        <begin position="147"/>
        <end position="157"/>
    </location>
</feature>
<feature type="turn" evidence="6">
    <location>
        <begin position="166"/>
        <end position="168"/>
    </location>
</feature>
<feature type="helix" evidence="4">
    <location>
        <begin position="179"/>
        <end position="185"/>
    </location>
</feature>
<feature type="strand" evidence="4">
    <location>
        <begin position="187"/>
        <end position="189"/>
    </location>
</feature>
<feature type="helix" evidence="4">
    <location>
        <begin position="198"/>
        <end position="201"/>
    </location>
</feature>
<feature type="helix" evidence="4">
    <location>
        <begin position="209"/>
        <end position="214"/>
    </location>
</feature>
<feature type="helix" evidence="4">
    <location>
        <begin position="219"/>
        <end position="221"/>
    </location>
</feature>
<feature type="helix" evidence="4">
    <location>
        <begin position="222"/>
        <end position="225"/>
    </location>
</feature>
<feature type="helix" evidence="4">
    <location>
        <begin position="226"/>
        <end position="229"/>
    </location>
</feature>
<feature type="strand" evidence="4">
    <location>
        <begin position="242"/>
        <end position="244"/>
    </location>
</feature>
<feature type="strand" evidence="4">
    <location>
        <begin position="246"/>
        <end position="249"/>
    </location>
</feature>
<feature type="strand" evidence="6">
    <location>
        <begin position="251"/>
        <end position="253"/>
    </location>
</feature>
<feature type="strand" evidence="4">
    <location>
        <begin position="260"/>
        <end position="264"/>
    </location>
</feature>
<feature type="turn" evidence="4">
    <location>
        <begin position="266"/>
        <end position="268"/>
    </location>
</feature>
<feature type="helix" evidence="4">
    <location>
        <begin position="275"/>
        <end position="280"/>
    </location>
</feature>
<feature type="helix" evidence="4">
    <location>
        <begin position="282"/>
        <end position="289"/>
    </location>
</feature>
<feature type="strand" evidence="4">
    <location>
        <begin position="376"/>
        <end position="380"/>
    </location>
</feature>
<feature type="helix" evidence="4">
    <location>
        <begin position="382"/>
        <end position="387"/>
    </location>
</feature>
<feature type="helix" evidence="4">
    <location>
        <begin position="468"/>
        <end position="476"/>
    </location>
</feature>
<feature type="strand" evidence="4">
    <location>
        <begin position="479"/>
        <end position="483"/>
    </location>
</feature>
<feature type="strand" evidence="4">
    <location>
        <begin position="486"/>
        <end position="490"/>
    </location>
</feature>
<feature type="strand" evidence="4">
    <location>
        <begin position="493"/>
        <end position="495"/>
    </location>
</feature>
<feature type="strand" evidence="4">
    <location>
        <begin position="497"/>
        <end position="506"/>
    </location>
</feature>
<feature type="strand" evidence="4">
    <location>
        <begin position="508"/>
        <end position="511"/>
    </location>
</feature>
<feature type="helix" evidence="4">
    <location>
        <begin position="515"/>
        <end position="517"/>
    </location>
</feature>
<feature type="strand" evidence="4">
    <location>
        <begin position="518"/>
        <end position="520"/>
    </location>
</feature>
<feature type="helix" evidence="4">
    <location>
        <begin position="525"/>
        <end position="533"/>
    </location>
</feature>
<feature type="turn" evidence="4">
    <location>
        <begin position="550"/>
        <end position="554"/>
    </location>
</feature>
<feature type="strand" evidence="4">
    <location>
        <begin position="560"/>
        <end position="568"/>
    </location>
</feature>
<feature type="strand" evidence="4">
    <location>
        <begin position="571"/>
        <end position="578"/>
    </location>
</feature>
<feature type="strand" evidence="4">
    <location>
        <begin position="581"/>
        <end position="585"/>
    </location>
</feature>
<feature type="turn" evidence="4">
    <location>
        <begin position="593"/>
        <end position="596"/>
    </location>
</feature>
<feature type="strand" evidence="4">
    <location>
        <begin position="597"/>
        <end position="599"/>
    </location>
</feature>
<feature type="helix" evidence="4">
    <location>
        <begin position="613"/>
        <end position="617"/>
    </location>
</feature>
<feature type="strand" evidence="4">
    <location>
        <begin position="623"/>
        <end position="625"/>
    </location>
</feature>
<feature type="strand" evidence="4">
    <location>
        <begin position="631"/>
        <end position="633"/>
    </location>
</feature>
<feature type="strand" evidence="4">
    <location>
        <begin position="636"/>
        <end position="640"/>
    </location>
</feature>
<feature type="turn" evidence="4">
    <location>
        <begin position="649"/>
        <end position="652"/>
    </location>
</feature>
<feature type="helix" evidence="4">
    <location>
        <begin position="664"/>
        <end position="666"/>
    </location>
</feature>
<feature type="turn" evidence="4">
    <location>
        <begin position="667"/>
        <end position="669"/>
    </location>
</feature>
<feature type="strand" evidence="4">
    <location>
        <begin position="672"/>
        <end position="676"/>
    </location>
</feature>
<feature type="strand" evidence="4">
    <location>
        <begin position="678"/>
        <end position="680"/>
    </location>
</feature>
<feature type="strand" evidence="4">
    <location>
        <begin position="685"/>
        <end position="687"/>
    </location>
</feature>
<feature type="helix" evidence="4">
    <location>
        <begin position="688"/>
        <end position="695"/>
    </location>
</feature>
<feature type="strand" evidence="4">
    <location>
        <begin position="701"/>
        <end position="704"/>
    </location>
</feature>
<feature type="strand" evidence="4">
    <location>
        <begin position="711"/>
        <end position="721"/>
    </location>
</feature>
<feature type="helix" evidence="4">
    <location>
        <begin position="723"/>
        <end position="734"/>
    </location>
</feature>
<feature type="helix" evidence="6">
    <location>
        <begin position="738"/>
        <end position="740"/>
    </location>
</feature>
<feature type="strand" evidence="4">
    <location>
        <begin position="745"/>
        <end position="747"/>
    </location>
</feature>
<feature type="strand" evidence="4">
    <location>
        <begin position="749"/>
        <end position="754"/>
    </location>
</feature>
<feature type="helix" evidence="4">
    <location>
        <begin position="759"/>
        <end position="761"/>
    </location>
</feature>
<feature type="strand" evidence="6">
    <location>
        <begin position="762"/>
        <end position="765"/>
    </location>
</feature>
<feature type="turn" evidence="4">
    <location>
        <begin position="782"/>
        <end position="784"/>
    </location>
</feature>
<feature type="strand" evidence="5">
    <location>
        <begin position="796"/>
        <end position="798"/>
    </location>
</feature>
<feature type="strand" evidence="4">
    <location>
        <begin position="801"/>
        <end position="808"/>
    </location>
</feature>
<feature type="strand" evidence="4">
    <location>
        <begin position="821"/>
        <end position="827"/>
    </location>
</feature>
<feature type="strand" evidence="4">
    <location>
        <begin position="830"/>
        <end position="837"/>
    </location>
</feature>
<feature type="turn" evidence="4">
    <location>
        <begin position="838"/>
        <end position="841"/>
    </location>
</feature>
<feature type="strand" evidence="4">
    <location>
        <begin position="849"/>
        <end position="851"/>
    </location>
</feature>
<feature type="strand" evidence="4">
    <location>
        <begin position="856"/>
        <end position="860"/>
    </location>
</feature>
<feature type="turn" evidence="4">
    <location>
        <begin position="863"/>
        <end position="867"/>
    </location>
</feature>
<feature type="helix" evidence="4">
    <location>
        <begin position="870"/>
        <end position="872"/>
    </location>
</feature>
<feature type="strand" evidence="4">
    <location>
        <begin position="873"/>
        <end position="879"/>
    </location>
</feature>
<feature type="turn" evidence="4">
    <location>
        <begin position="880"/>
        <end position="883"/>
    </location>
</feature>
<feature type="strand" evidence="4">
    <location>
        <begin position="884"/>
        <end position="890"/>
    </location>
</feature>
<feature type="helix" evidence="4">
    <location>
        <begin position="891"/>
        <end position="893"/>
    </location>
</feature>
<feature type="strand" evidence="4">
    <location>
        <begin position="910"/>
        <end position="919"/>
    </location>
</feature>
<feature type="strand" evidence="6">
    <location>
        <begin position="924"/>
        <end position="927"/>
    </location>
</feature>
<feature type="strand" evidence="4">
    <location>
        <begin position="936"/>
        <end position="948"/>
    </location>
</feature>
<feature type="strand" evidence="4">
    <location>
        <begin position="950"/>
        <end position="955"/>
    </location>
</feature>
<feature type="strand" evidence="4">
    <location>
        <begin position="958"/>
        <end position="969"/>
    </location>
</feature>
<feature type="strand" evidence="4">
    <location>
        <begin position="974"/>
        <end position="981"/>
    </location>
</feature>
<feature type="strand" evidence="4">
    <location>
        <begin position="984"/>
        <end position="987"/>
    </location>
</feature>
<feature type="helix" evidence="4">
    <location>
        <begin position="989"/>
        <end position="996"/>
    </location>
</feature>
<protein>
    <recommendedName>
        <fullName>Mgp-operon protein 3</fullName>
        <shortName>Mgp3</shortName>
    </recommendedName>
    <alternativeName>
        <fullName>ORF-3 protein</fullName>
    </alternativeName>
</protein>
<accession>Q50341</accession>
<gene>
    <name type="ordered locus">MPN_142</name>
    <name type="ORF">MP012</name>
</gene>
<reference key="1">
    <citation type="journal article" date="1988" name="Gene">
        <title>Analysis of the nucleotide sequence of the P1 operon of Mycoplasma pneumoniae.</title>
        <authorList>
            <person name="Inamine J.M."/>
            <person name="Loechel S."/>
            <person name="Hu P.C."/>
        </authorList>
    </citation>
    <scope>NUCLEOTIDE SEQUENCE [GENOMIC DNA]</scope>
    <source>
        <strain>ATCC 29342 / M129 / Subtype 1</strain>
    </source>
</reference>
<reference key="2">
    <citation type="journal article" date="1996" name="Nucleic Acids Res.">
        <title>Complete sequence analysis of the genome of the bacterium Mycoplasma pneumoniae.</title>
        <authorList>
            <person name="Himmelreich R."/>
            <person name="Hilbert H."/>
            <person name="Plagens H."/>
            <person name="Pirkl E."/>
            <person name="Li B.-C."/>
            <person name="Herrmann R."/>
        </authorList>
    </citation>
    <scope>NUCLEOTIDE SEQUENCE [LARGE SCALE GENOMIC DNA]</scope>
    <source>
        <strain>ATCC 29342 / M129 / Subtype 1</strain>
    </source>
</reference>
<reference key="3">
    <citation type="journal article" date="2000" name="Electrophoresis">
        <title>Towards a two-dimensional proteome map of Mycoplasma pneumoniae.</title>
        <authorList>
            <person name="Regula J.T."/>
            <person name="Ueberle B."/>
            <person name="Boguth G."/>
            <person name="Goerg A."/>
            <person name="Schnoelzer M."/>
            <person name="Herrmann R."/>
            <person name="Frank R."/>
        </authorList>
    </citation>
    <scope>IDENTIFICATION BY MASS SPECTROMETRY</scope>
    <source>
        <strain>ATCC 29342 / M129 / Subtype 1</strain>
    </source>
</reference>
<dbReference type="EMBL" id="M21519">
    <property type="protein sequence ID" value="AAA88326.1"/>
    <property type="molecule type" value="Genomic_DNA"/>
</dbReference>
<dbReference type="EMBL" id="U00089">
    <property type="protein sequence ID" value="AAB95660.1"/>
    <property type="molecule type" value="Genomic_DNA"/>
</dbReference>
<dbReference type="PIR" id="JS0069">
    <property type="entry name" value="JS0069"/>
</dbReference>
<dbReference type="RefSeq" id="NP_109830.1">
    <property type="nucleotide sequence ID" value="NC_000912.1"/>
</dbReference>
<dbReference type="RefSeq" id="WP_010874499.1">
    <property type="nucleotide sequence ID" value="NC_000912.1"/>
</dbReference>
<dbReference type="PDB" id="6RJ1">
    <property type="method" value="X-ray"/>
    <property type="resolution" value="2.65 A"/>
    <property type="chains" value="A/B=23-998"/>
</dbReference>
<dbReference type="PDB" id="6TLZ">
    <property type="method" value="X-ray"/>
    <property type="resolution" value="3.10 A"/>
    <property type="chains" value="A/B=23-998"/>
</dbReference>
<dbReference type="PDB" id="6TM0">
    <property type="method" value="X-ray"/>
    <property type="resolution" value="2.80 A"/>
    <property type="chains" value="A/B=23-998"/>
</dbReference>
<dbReference type="PDBsum" id="6RJ1"/>
<dbReference type="PDBsum" id="6TLZ"/>
<dbReference type="PDBsum" id="6TM0"/>
<dbReference type="SMR" id="Q50341"/>
<dbReference type="IntAct" id="Q50341">
    <property type="interactions" value="2"/>
</dbReference>
<dbReference type="STRING" id="272634.MPN_142"/>
<dbReference type="UniLectin" id="Q50341"/>
<dbReference type="EnsemblBacteria" id="AAB95660">
    <property type="protein sequence ID" value="AAB95660"/>
    <property type="gene ID" value="MPN_142"/>
</dbReference>
<dbReference type="KEGG" id="mpn:MPN_142"/>
<dbReference type="PATRIC" id="fig|272634.6.peg.156"/>
<dbReference type="HOGENOM" id="CLU_268940_0_0_14"/>
<dbReference type="OrthoDB" id="403305at2"/>
<dbReference type="BioCyc" id="MPNE272634:G1GJ3-240-MONOMER"/>
<dbReference type="Proteomes" id="UP000000808">
    <property type="component" value="Chromosome"/>
</dbReference>
<dbReference type="GO" id="GO:0005886">
    <property type="term" value="C:plasma membrane"/>
    <property type="evidence" value="ECO:0007669"/>
    <property type="project" value="UniProtKB-SubCell"/>
</dbReference>
<dbReference type="GO" id="GO:0007155">
    <property type="term" value="P:cell adhesion"/>
    <property type="evidence" value="ECO:0007669"/>
    <property type="project" value="UniProtKB-KW"/>
</dbReference>
<dbReference type="CDD" id="cd20279">
    <property type="entry name" value="adhesin_P110-like"/>
    <property type="match status" value="1"/>
</dbReference>
<dbReference type="InterPro" id="IPR045839">
    <property type="entry name" value="MGP3_C"/>
</dbReference>
<dbReference type="InterPro" id="IPR007885">
    <property type="entry name" value="MgpC"/>
</dbReference>
<dbReference type="Pfam" id="PF19342">
    <property type="entry name" value="MGP3_C"/>
    <property type="match status" value="1"/>
</dbReference>
<dbReference type="Pfam" id="PF05220">
    <property type="entry name" value="MgpC"/>
    <property type="match status" value="1"/>
</dbReference>
<evidence type="ECO:0000255" key="1"/>
<evidence type="ECO:0000256" key="2">
    <source>
        <dbReference type="SAM" id="MobiDB-lite"/>
    </source>
</evidence>
<evidence type="ECO:0000305" key="3"/>
<evidence type="ECO:0007829" key="4">
    <source>
        <dbReference type="PDB" id="6RJ1"/>
    </source>
</evidence>
<evidence type="ECO:0007829" key="5">
    <source>
        <dbReference type="PDB" id="6TLZ"/>
    </source>
</evidence>
<evidence type="ECO:0007829" key="6">
    <source>
        <dbReference type="PDB" id="6TM0"/>
    </source>
</evidence>
<proteinExistence type="evidence at protein level"/>
<sequence>MKSKLKLKRYLLFLPLLPLGTLSLANTYLLQDHNTLTPYTPFTTPLNGGLDVVRAAHLHPSYELVDWKRVGDTKLVALVRSALVRVKFQDTTSSDQSNTNQNALSFDTQESQKALNGSQSGSSDTSGSNSQDFASYVLIFKAAPRATWVFERKIKLALPYVKQESQGSGDQGSNGKGSLYKTLQDLLVEQPVTPYTPNAGLARVNGVAQDTVHFGSGQESSWNSQRSQKGLKNNPGPKAVTGFKLDKGRAYRKLNESWPVYEPLDSTKEGKGKDESSWKNSEKTTAENDAPLVGMVGSGAAGSASSLQGNGSNSSGLKSLLRSAPVSVPPSSTSNQTLSLSNPAPVGPQAVVSQPAGGATAAVSVNRTASDTATFSKYLNTAQALHQMGVIVPGLEKWGGNNGTGVVASRQDATSTNLPHAAGASQTGLGTGSPREPALTATSQRAVTVVAGPLRAGNSSETDALPNVITQLYHTSTAQLAYLNGQIVVMGSDRVPSLWYWVVGEDQESGKATWWAKTELNWGTDKQKQFVENQLGFKDDSNSDSKNSNLKAQGLTQPAYLIAGLDVVADHLVFAAFKAGAVGYDMTTDSSASTYNQALAWSTTAGLDSDGGYKALVENTAGLNGPINGLFTLLDTFAYVTPVSGMKGGSQNNEEVQTTYPVKSDQKATAKIASLINASPLNSYGDDGVTVFDALGLNFNFKLNEERLPSRTDQLLVYGIVNESELKSARENAQSTSDDNSNTKVKWTNTASHYLPVPYYYSANFPEAGNRRRAEQRNGVKISTLESQATDGFANSLLNFGTGLKAGVDPAPVARGHKPNYSAVLLVRGGVVRLNFNPDTDKLLDSTDKNSEPISFSYTPFGSAESAVDLTTLKDVTYIAESGLWFYTFDNGEKPTYDGKQQQVKNRKGYAVITVSRTGIEFNEDANTTTLSQAPAALAVQNGIASSQDDLTGILPLSDEFSAVITKDQTWTGKVDIYKNTNGLFEKDDQLSENVKRRDNGLVPIYNEGIVDIWGRVDFAANSVLQARNLTDKTVDEVINNPDILQSFFKFTPAFDNQRAMLVGEKTSDTTLTVKPKIEYLDGNFYGEDSKIAGIPLNIDFPSRIFAGFAALPSWVIPVSVGSSVGILLILLILGLGIGIPMYKVRKLQDSSFVDVFKKVDTLTTAVGSVYKKIITQTSVIKKAPSALKAANNAAPKAPVKPAAPTAPRPPVQPPKKA</sequence>
<comment type="subcellular location">
    <subcellularLocation>
        <location evidence="3">Cell membrane</location>
        <topology evidence="3">Single-pass membrane protein</topology>
    </subcellularLocation>
</comment>
<organism>
    <name type="scientific">Mycoplasma pneumoniae (strain ATCC 29342 / M129 / Subtype 1)</name>
    <name type="common">Mycoplasmoides pneumoniae</name>
    <dbReference type="NCBI Taxonomy" id="272634"/>
    <lineage>
        <taxon>Bacteria</taxon>
        <taxon>Bacillati</taxon>
        <taxon>Mycoplasmatota</taxon>
        <taxon>Mycoplasmoidales</taxon>
        <taxon>Mycoplasmoidaceae</taxon>
        <taxon>Mycoplasmoides</taxon>
    </lineage>
</organism>
<name>MGP3_MYCPN</name>
<keyword id="KW-0002">3D-structure</keyword>
<keyword id="KW-0130">Cell adhesion</keyword>
<keyword id="KW-1003">Cell membrane</keyword>
<keyword id="KW-0472">Membrane</keyword>
<keyword id="KW-1185">Reference proteome</keyword>
<keyword id="KW-0732">Signal</keyword>
<keyword id="KW-0812">Transmembrane</keyword>
<keyword id="KW-1133">Transmembrane helix</keyword>